<comment type="function">
    <text evidence="1">Together with its co-chaperonin GroES, plays an essential role in assisting protein folding. The GroEL-GroES system forms a nano-cage that allows encapsulation of the non-native substrate proteins and provides a physical environment optimized to promote and accelerate protein folding.</text>
</comment>
<comment type="catalytic activity">
    <reaction evidence="1">
        <text>ATP + H2O + a folded polypeptide = ADP + phosphate + an unfolded polypeptide.</text>
        <dbReference type="EC" id="5.6.1.7"/>
    </reaction>
</comment>
<comment type="subunit">
    <text evidence="1">Forms a cylinder of 14 subunits composed of two heptameric rings stacked back-to-back. Interacts with the co-chaperonin GroES.</text>
</comment>
<comment type="subcellular location">
    <subcellularLocation>
        <location evidence="1">Cytoplasm</location>
    </subcellularLocation>
</comment>
<comment type="similarity">
    <text evidence="1">Belongs to the chaperonin (HSP60) family.</text>
</comment>
<organism>
    <name type="scientific">Synechococcus elongatus (strain ATCC 33912 / PCC 7942 / FACHB-805)</name>
    <name type="common">Anacystis nidulans R2</name>
    <dbReference type="NCBI Taxonomy" id="1140"/>
    <lineage>
        <taxon>Bacteria</taxon>
        <taxon>Bacillati</taxon>
        <taxon>Cyanobacteriota</taxon>
        <taxon>Cyanophyceae</taxon>
        <taxon>Synechococcales</taxon>
        <taxon>Synechococcaceae</taxon>
        <taxon>Synechococcus</taxon>
    </lineage>
</organism>
<protein>
    <recommendedName>
        <fullName evidence="1">Chaperonin GroEL</fullName>
        <ecNumber evidence="1">5.6.1.7</ecNumber>
    </recommendedName>
    <alternativeName>
        <fullName evidence="1">60 kDa chaperonin</fullName>
    </alternativeName>
    <alternativeName>
        <fullName evidence="1">Chaperonin-60</fullName>
        <shortName evidence="1">Cpn60</shortName>
    </alternativeName>
</protein>
<gene>
    <name evidence="1" type="primary">groEL</name>
    <name type="synonym">cpn60</name>
    <name evidence="1" type="synonym">groL</name>
    <name type="synonym">mopA</name>
    <name type="ordered locus">Synpcc7942_2313</name>
</gene>
<dbReference type="EC" id="5.6.1.7" evidence="1"/>
<dbReference type="EMBL" id="M58751">
    <property type="protein sequence ID" value="AAA27314.1"/>
    <property type="molecule type" value="Genomic_DNA"/>
</dbReference>
<dbReference type="EMBL" id="CP000100">
    <property type="protein sequence ID" value="ABB58343.1"/>
    <property type="molecule type" value="Genomic_DNA"/>
</dbReference>
<dbReference type="PIR" id="B36721">
    <property type="entry name" value="BVYCGL"/>
</dbReference>
<dbReference type="RefSeq" id="WP_011244099.1">
    <property type="nucleotide sequence ID" value="NZ_JACJTX010000001.1"/>
</dbReference>
<dbReference type="SMR" id="P22879"/>
<dbReference type="STRING" id="1140.Synpcc7942_2313"/>
<dbReference type="PaxDb" id="1140-Synpcc7942_2313"/>
<dbReference type="GeneID" id="72431200"/>
<dbReference type="KEGG" id="syf:Synpcc7942_2313"/>
<dbReference type="eggNOG" id="COG0459">
    <property type="taxonomic scope" value="Bacteria"/>
</dbReference>
<dbReference type="HOGENOM" id="CLU_016503_3_0_3"/>
<dbReference type="OrthoDB" id="9766614at2"/>
<dbReference type="BioCyc" id="SYNEL:SYNPCC7942_2313-MONOMER"/>
<dbReference type="Proteomes" id="UP000889800">
    <property type="component" value="Chromosome"/>
</dbReference>
<dbReference type="GO" id="GO:0005737">
    <property type="term" value="C:cytoplasm"/>
    <property type="evidence" value="ECO:0007669"/>
    <property type="project" value="UniProtKB-SubCell"/>
</dbReference>
<dbReference type="GO" id="GO:0005524">
    <property type="term" value="F:ATP binding"/>
    <property type="evidence" value="ECO:0007669"/>
    <property type="project" value="UniProtKB-UniRule"/>
</dbReference>
<dbReference type="GO" id="GO:0140662">
    <property type="term" value="F:ATP-dependent protein folding chaperone"/>
    <property type="evidence" value="ECO:0007669"/>
    <property type="project" value="InterPro"/>
</dbReference>
<dbReference type="GO" id="GO:0016853">
    <property type="term" value="F:isomerase activity"/>
    <property type="evidence" value="ECO:0007669"/>
    <property type="project" value="UniProtKB-KW"/>
</dbReference>
<dbReference type="GO" id="GO:0051082">
    <property type="term" value="F:unfolded protein binding"/>
    <property type="evidence" value="ECO:0007669"/>
    <property type="project" value="UniProtKB-UniRule"/>
</dbReference>
<dbReference type="GO" id="GO:0042026">
    <property type="term" value="P:protein refolding"/>
    <property type="evidence" value="ECO:0007669"/>
    <property type="project" value="UniProtKB-UniRule"/>
</dbReference>
<dbReference type="CDD" id="cd03344">
    <property type="entry name" value="GroEL"/>
    <property type="match status" value="1"/>
</dbReference>
<dbReference type="FunFam" id="3.50.7.10:FF:000001">
    <property type="entry name" value="60 kDa chaperonin"/>
    <property type="match status" value="1"/>
</dbReference>
<dbReference type="Gene3D" id="3.50.7.10">
    <property type="entry name" value="GroEL"/>
    <property type="match status" value="1"/>
</dbReference>
<dbReference type="Gene3D" id="1.10.560.10">
    <property type="entry name" value="GroEL-like equatorial domain"/>
    <property type="match status" value="1"/>
</dbReference>
<dbReference type="Gene3D" id="3.30.260.10">
    <property type="entry name" value="TCP-1-like chaperonin intermediate domain"/>
    <property type="match status" value="1"/>
</dbReference>
<dbReference type="HAMAP" id="MF_00600">
    <property type="entry name" value="CH60"/>
    <property type="match status" value="1"/>
</dbReference>
<dbReference type="InterPro" id="IPR018370">
    <property type="entry name" value="Chaperonin_Cpn60_CS"/>
</dbReference>
<dbReference type="InterPro" id="IPR001844">
    <property type="entry name" value="Cpn60/GroEL"/>
</dbReference>
<dbReference type="InterPro" id="IPR002423">
    <property type="entry name" value="Cpn60/GroEL/TCP-1"/>
</dbReference>
<dbReference type="InterPro" id="IPR027409">
    <property type="entry name" value="GroEL-like_apical_dom_sf"/>
</dbReference>
<dbReference type="InterPro" id="IPR027413">
    <property type="entry name" value="GROEL-like_equatorial_sf"/>
</dbReference>
<dbReference type="InterPro" id="IPR027410">
    <property type="entry name" value="TCP-1-like_intermed_sf"/>
</dbReference>
<dbReference type="NCBIfam" id="TIGR02348">
    <property type="entry name" value="GroEL"/>
    <property type="match status" value="1"/>
</dbReference>
<dbReference type="NCBIfam" id="NF000592">
    <property type="entry name" value="PRK00013.1"/>
    <property type="match status" value="1"/>
</dbReference>
<dbReference type="NCBIfam" id="NF009487">
    <property type="entry name" value="PRK12849.1"/>
    <property type="match status" value="1"/>
</dbReference>
<dbReference type="NCBIfam" id="NF009488">
    <property type="entry name" value="PRK12850.1"/>
    <property type="match status" value="1"/>
</dbReference>
<dbReference type="NCBIfam" id="NF009489">
    <property type="entry name" value="PRK12851.1"/>
    <property type="match status" value="1"/>
</dbReference>
<dbReference type="PANTHER" id="PTHR45633">
    <property type="entry name" value="60 KDA HEAT SHOCK PROTEIN, MITOCHONDRIAL"/>
    <property type="match status" value="1"/>
</dbReference>
<dbReference type="Pfam" id="PF00118">
    <property type="entry name" value="Cpn60_TCP1"/>
    <property type="match status" value="1"/>
</dbReference>
<dbReference type="PRINTS" id="PR00298">
    <property type="entry name" value="CHAPERONIN60"/>
</dbReference>
<dbReference type="SUPFAM" id="SSF52029">
    <property type="entry name" value="GroEL apical domain-like"/>
    <property type="match status" value="1"/>
</dbReference>
<dbReference type="SUPFAM" id="SSF48592">
    <property type="entry name" value="GroEL equatorial domain-like"/>
    <property type="match status" value="2"/>
</dbReference>
<dbReference type="PROSITE" id="PS00296">
    <property type="entry name" value="CHAPERONINS_CPN60"/>
    <property type="match status" value="1"/>
</dbReference>
<name>CH60_SYNE7</name>
<evidence type="ECO:0000255" key="1">
    <source>
        <dbReference type="HAMAP-Rule" id="MF_00600"/>
    </source>
</evidence>
<evidence type="ECO:0000305" key="2"/>
<feature type="chain" id="PRO_0000063569" description="Chaperonin GroEL">
    <location>
        <begin position="1"/>
        <end position="544"/>
    </location>
</feature>
<feature type="binding site" evidence="1">
    <location>
        <begin position="29"/>
        <end position="32"/>
    </location>
    <ligand>
        <name>ATP</name>
        <dbReference type="ChEBI" id="CHEBI:30616"/>
    </ligand>
</feature>
<feature type="binding site" evidence="1">
    <location>
        <begin position="86"/>
        <end position="90"/>
    </location>
    <ligand>
        <name>ATP</name>
        <dbReference type="ChEBI" id="CHEBI:30616"/>
    </ligand>
</feature>
<feature type="binding site" evidence="1">
    <location>
        <position position="413"/>
    </location>
    <ligand>
        <name>ATP</name>
        <dbReference type="ChEBI" id="CHEBI:30616"/>
    </ligand>
</feature>
<feature type="binding site" evidence="1">
    <location>
        <position position="495"/>
    </location>
    <ligand>
        <name>ATP</name>
        <dbReference type="ChEBI" id="CHEBI:30616"/>
    </ligand>
</feature>
<feature type="sequence conflict" description="In Ref. 1; AAA27314." evidence="2" ref="1">
    <original>GL</original>
    <variation>AR</variation>
    <location>
        <begin position="305"/>
        <end position="306"/>
    </location>
</feature>
<feature type="sequence conflict" description="In Ref. 1; AAA27314." evidence="2" ref="1">
    <original>P</original>
    <variation>R</variation>
    <location>
        <position position="450"/>
    </location>
</feature>
<keyword id="KW-0067">ATP-binding</keyword>
<keyword id="KW-0143">Chaperone</keyword>
<keyword id="KW-0963">Cytoplasm</keyword>
<keyword id="KW-0413">Isomerase</keyword>
<keyword id="KW-0547">Nucleotide-binding</keyword>
<keyword id="KW-1185">Reference proteome</keyword>
<reference key="1">
    <citation type="journal article" date="1990" name="J. Bacteriol.">
        <title>Regulation and sequence of the Synechococcus sp. strain PCC 7942 groESL operon, encoding a cyanobacterial chaperonin.</title>
        <authorList>
            <person name="Webb R."/>
            <person name="Reddy K.J."/>
            <person name="Sherman L.A."/>
        </authorList>
    </citation>
    <scope>NUCLEOTIDE SEQUENCE [GENOMIC DNA]</scope>
</reference>
<reference key="2">
    <citation type="submission" date="2005-08" db="EMBL/GenBank/DDBJ databases">
        <title>Complete sequence of chromosome 1 of Synechococcus elongatus PCC 7942.</title>
        <authorList>
            <consortium name="US DOE Joint Genome Institute"/>
            <person name="Copeland A."/>
            <person name="Lucas S."/>
            <person name="Lapidus A."/>
            <person name="Barry K."/>
            <person name="Detter J.C."/>
            <person name="Glavina T."/>
            <person name="Hammon N."/>
            <person name="Israni S."/>
            <person name="Pitluck S."/>
            <person name="Schmutz J."/>
            <person name="Larimer F."/>
            <person name="Land M."/>
            <person name="Kyrpides N."/>
            <person name="Lykidis A."/>
            <person name="Golden S."/>
            <person name="Richardson P."/>
        </authorList>
    </citation>
    <scope>NUCLEOTIDE SEQUENCE [LARGE SCALE GENOMIC DNA]</scope>
    <source>
        <strain>ATCC 33912 / PCC 7942 / FACHB-805</strain>
    </source>
</reference>
<sequence>MAKRIIYNENARRALEKGIDILAEAVAVTLGPKGRNVVLEKKFGAPQIINDGVTIAKEIELEDHIENTGVALIRQAASKTNDAAGDGTTTATVLAHAVVKEGLRNVAAGANAILLKRGIDKATNFLVEQIKSHARPVEDSKSIAQVGAISAGNDFEVGQMIADAMDKVGKEGVISLEEGKSMTTELEVTEGMRFDKGYISPYFATDTERMEAVFDEPFILITDKKIGLVQDLVPVLEQVARAGRPLVIIAEDIEKEALATLVVNRLRGVLNVAAVKAPGFGDRRKAMLEDIAVLTGGQLITEDAGLKLDTTKLDQLGKARRITITKDNTTIVAEGNEAAVKARVDQIRRQIEETESSYDKEKLQERLAKLSGGVAVVKVGAATETEMKDRKLRLEDAINATKAAVEEGIVPGGGTTLAHLAPQLEEWATANLSGEELTGAQIVARALTAPLKRIAENAGLNGAVISERVKELPFDEGYDASNNQFVNMFTAGIVDPAKVTRSALQNAASIAAMVLTTECIVVDKPEPKEKAPAGAGGGMGDFDY</sequence>
<proteinExistence type="inferred from homology"/>
<accession>P22879</accession>
<accession>Q31KS6</accession>